<organism>
    <name type="scientific">Reclinomonas americana</name>
    <dbReference type="NCBI Taxonomy" id="48483"/>
    <lineage>
        <taxon>Eukaryota</taxon>
        <taxon>Discoba</taxon>
        <taxon>Jakobida</taxon>
        <taxon>Histionina</taxon>
        <taxon>Histionidae</taxon>
        <taxon>Reclinomonas</taxon>
    </lineage>
</organism>
<dbReference type="EMBL" id="AF007261">
    <property type="protein sequence ID" value="AAD11902.1"/>
    <property type="molecule type" value="Genomic_DNA"/>
</dbReference>
<dbReference type="PIR" id="S78169">
    <property type="entry name" value="S78169"/>
</dbReference>
<dbReference type="RefSeq" id="NP_044787.1">
    <property type="nucleotide sequence ID" value="NC_001823.1"/>
</dbReference>
<dbReference type="SMR" id="O21275"/>
<dbReference type="GeneID" id="801070"/>
<dbReference type="GO" id="GO:0005739">
    <property type="term" value="C:mitochondrion"/>
    <property type="evidence" value="ECO:0007669"/>
    <property type="project" value="UniProtKB-SubCell"/>
</dbReference>
<dbReference type="GO" id="GO:1990904">
    <property type="term" value="C:ribonucleoprotein complex"/>
    <property type="evidence" value="ECO:0007669"/>
    <property type="project" value="UniProtKB-KW"/>
</dbReference>
<dbReference type="GO" id="GO:0005840">
    <property type="term" value="C:ribosome"/>
    <property type="evidence" value="ECO:0007669"/>
    <property type="project" value="UniProtKB-KW"/>
</dbReference>
<dbReference type="GO" id="GO:0003735">
    <property type="term" value="F:structural constituent of ribosome"/>
    <property type="evidence" value="ECO:0007669"/>
    <property type="project" value="InterPro"/>
</dbReference>
<dbReference type="GO" id="GO:0006412">
    <property type="term" value="P:translation"/>
    <property type="evidence" value="ECO:0007669"/>
    <property type="project" value="InterPro"/>
</dbReference>
<dbReference type="FunFam" id="2.40.50.100:FF:000060">
    <property type="entry name" value="Apicoplast ribosomal protein L27"/>
    <property type="match status" value="1"/>
</dbReference>
<dbReference type="Gene3D" id="2.40.50.100">
    <property type="match status" value="1"/>
</dbReference>
<dbReference type="HAMAP" id="MF_00539">
    <property type="entry name" value="Ribosomal_bL27"/>
    <property type="match status" value="1"/>
</dbReference>
<dbReference type="InterPro" id="IPR001684">
    <property type="entry name" value="Ribosomal_bL27"/>
</dbReference>
<dbReference type="NCBIfam" id="TIGR00062">
    <property type="entry name" value="L27"/>
    <property type="match status" value="1"/>
</dbReference>
<dbReference type="PANTHER" id="PTHR15893:SF0">
    <property type="entry name" value="LARGE RIBOSOMAL SUBUNIT PROTEIN BL27M"/>
    <property type="match status" value="1"/>
</dbReference>
<dbReference type="PANTHER" id="PTHR15893">
    <property type="entry name" value="RIBOSOMAL PROTEIN L27"/>
    <property type="match status" value="1"/>
</dbReference>
<dbReference type="Pfam" id="PF01016">
    <property type="entry name" value="Ribosomal_L27"/>
    <property type="match status" value="1"/>
</dbReference>
<dbReference type="PRINTS" id="PR00063">
    <property type="entry name" value="RIBOSOMALL27"/>
</dbReference>
<dbReference type="SUPFAM" id="SSF110324">
    <property type="entry name" value="Ribosomal L27 protein-like"/>
    <property type="match status" value="1"/>
</dbReference>
<sequence length="81" mass="8895">MATKKSGGSSRNGRDSKGRRLGVKLFGGEYATIGSIIVRQRGTKILPYKNVGLGRDHTIFALKEGIVSYYKDKTKTYVSIV</sequence>
<accession>O21275</accession>
<proteinExistence type="inferred from homology"/>
<geneLocation type="mitochondrion"/>
<reference key="1">
    <citation type="journal article" date="1997" name="Nature">
        <title>An ancestral mitochondrial DNA resembling a eubacterial genome in miniature.</title>
        <authorList>
            <person name="Lang B.F."/>
            <person name="Burger G."/>
            <person name="O'Kelly C.J."/>
            <person name="Cedergren R."/>
            <person name="Golding G.B."/>
            <person name="Lemieux C."/>
            <person name="Sankoff D."/>
            <person name="Turmel M."/>
            <person name="Gray M.W."/>
        </authorList>
    </citation>
    <scope>NUCLEOTIDE SEQUENCE [GENOMIC DNA]</scope>
    <source>
        <strain>ATCC 50394</strain>
    </source>
</reference>
<feature type="chain" id="PRO_0000181228" description="Large ribosomal subunit protein bL27m">
    <location>
        <begin position="1"/>
        <end position="81"/>
    </location>
</feature>
<feature type="region of interest" description="Disordered" evidence="1">
    <location>
        <begin position="1"/>
        <end position="20"/>
    </location>
</feature>
<feature type="compositionally biased region" description="Polar residues" evidence="1">
    <location>
        <begin position="1"/>
        <end position="11"/>
    </location>
</feature>
<name>RM27_RECAM</name>
<protein>
    <recommendedName>
        <fullName evidence="2">Large ribosomal subunit protein bL27m</fullName>
    </recommendedName>
    <alternativeName>
        <fullName>60S ribosomal protein L27, mitochondrial</fullName>
    </alternativeName>
</protein>
<evidence type="ECO:0000256" key="1">
    <source>
        <dbReference type="SAM" id="MobiDB-lite"/>
    </source>
</evidence>
<evidence type="ECO:0000305" key="2"/>
<keyword id="KW-0496">Mitochondrion</keyword>
<keyword id="KW-0687">Ribonucleoprotein</keyword>
<keyword id="KW-0689">Ribosomal protein</keyword>
<gene>
    <name type="primary">RPL27</name>
</gene>
<comment type="subcellular location">
    <subcellularLocation>
        <location>Mitochondrion</location>
    </subcellularLocation>
</comment>
<comment type="similarity">
    <text evidence="2">Belongs to the bacterial ribosomal protein bL27 family.</text>
</comment>